<name>QUEA_PSEP7</name>
<accession>A6V0T8</accession>
<comment type="function">
    <text evidence="1">Transfers and isomerizes the ribose moiety from AdoMet to the 7-aminomethyl group of 7-deazaguanine (preQ1-tRNA) to give epoxyqueuosine (oQ-tRNA).</text>
</comment>
<comment type="catalytic activity">
    <reaction evidence="1">
        <text>7-aminomethyl-7-carbaguanosine(34) in tRNA + S-adenosyl-L-methionine = epoxyqueuosine(34) in tRNA + adenine + L-methionine + 2 H(+)</text>
        <dbReference type="Rhea" id="RHEA:32155"/>
        <dbReference type="Rhea" id="RHEA-COMP:10342"/>
        <dbReference type="Rhea" id="RHEA-COMP:18582"/>
        <dbReference type="ChEBI" id="CHEBI:15378"/>
        <dbReference type="ChEBI" id="CHEBI:16708"/>
        <dbReference type="ChEBI" id="CHEBI:57844"/>
        <dbReference type="ChEBI" id="CHEBI:59789"/>
        <dbReference type="ChEBI" id="CHEBI:82833"/>
        <dbReference type="ChEBI" id="CHEBI:194443"/>
        <dbReference type="EC" id="2.4.99.17"/>
    </reaction>
</comment>
<comment type="pathway">
    <text evidence="1">tRNA modification; tRNA-queuosine biosynthesis.</text>
</comment>
<comment type="subunit">
    <text evidence="1">Monomer.</text>
</comment>
<comment type="subcellular location">
    <subcellularLocation>
        <location evidence="1">Cytoplasm</location>
    </subcellularLocation>
</comment>
<comment type="similarity">
    <text evidence="1">Belongs to the QueA family.</text>
</comment>
<keyword id="KW-0963">Cytoplasm</keyword>
<keyword id="KW-0671">Queuosine biosynthesis</keyword>
<keyword id="KW-0949">S-adenosyl-L-methionine</keyword>
<keyword id="KW-0808">Transferase</keyword>
<proteinExistence type="inferred from homology"/>
<evidence type="ECO:0000255" key="1">
    <source>
        <dbReference type="HAMAP-Rule" id="MF_00113"/>
    </source>
</evidence>
<organism>
    <name type="scientific">Pseudomonas paraeruginosa (strain DSM 24068 / PA7)</name>
    <name type="common">Pseudomonas aeruginosa (strain PA7)</name>
    <dbReference type="NCBI Taxonomy" id="381754"/>
    <lineage>
        <taxon>Bacteria</taxon>
        <taxon>Pseudomonadati</taxon>
        <taxon>Pseudomonadota</taxon>
        <taxon>Gammaproteobacteria</taxon>
        <taxon>Pseudomonadales</taxon>
        <taxon>Pseudomonadaceae</taxon>
        <taxon>Pseudomonas</taxon>
        <taxon>Pseudomonas paraeruginosa</taxon>
    </lineage>
</organism>
<sequence length="347" mass="38119">MRVADFHFDLPEALIARHPLPERRASRLLALDGPTGSLAHKQFADLLDYLRPGDLMVFNNTRVIPARLFGQKESGGKLEVLVERVLDQHRVLAHVRASKAPKPGTRILVEGGGSAEMLQRHDALFELAFAEPVLPLLERVGHMPLPPYIDRPDDAADRERYQTVYAQRAGAVAAPTAGLHFDEALLEAIRAKGVDTAFVTLHVGAGTFQPVRVERIEDHVMHREWLEVGQDVVDAVAACRARGGRVVAVGTTSVRSLESAARDGELKPFSGDTDIFIYPGRPFHVVDALVTNFHLPESTLLMLVSAFAGYPETMAAYAAAVEQGYRFFSYGDAMFITRNPAPRGPED</sequence>
<gene>
    <name evidence="1" type="primary">queA</name>
    <name type="ordered locus">PSPA7_1289</name>
</gene>
<feature type="chain" id="PRO_1000015247" description="S-adenosylmethionine:tRNA ribosyltransferase-isomerase">
    <location>
        <begin position="1"/>
        <end position="347"/>
    </location>
</feature>
<dbReference type="EC" id="2.4.99.17" evidence="1"/>
<dbReference type="EMBL" id="CP000744">
    <property type="protein sequence ID" value="ABR84196.1"/>
    <property type="molecule type" value="Genomic_DNA"/>
</dbReference>
<dbReference type="RefSeq" id="WP_012074550.1">
    <property type="nucleotide sequence ID" value="NC_009656.1"/>
</dbReference>
<dbReference type="SMR" id="A6V0T8"/>
<dbReference type="GeneID" id="77219680"/>
<dbReference type="KEGG" id="pap:PSPA7_1289"/>
<dbReference type="HOGENOM" id="CLU_039110_1_0_6"/>
<dbReference type="UniPathway" id="UPA00392"/>
<dbReference type="Proteomes" id="UP000001582">
    <property type="component" value="Chromosome"/>
</dbReference>
<dbReference type="GO" id="GO:0005737">
    <property type="term" value="C:cytoplasm"/>
    <property type="evidence" value="ECO:0007669"/>
    <property type="project" value="UniProtKB-SubCell"/>
</dbReference>
<dbReference type="GO" id="GO:0051075">
    <property type="term" value="F:S-adenosylmethionine:tRNA ribosyltransferase-isomerase activity"/>
    <property type="evidence" value="ECO:0007669"/>
    <property type="project" value="UniProtKB-EC"/>
</dbReference>
<dbReference type="GO" id="GO:0008616">
    <property type="term" value="P:queuosine biosynthetic process"/>
    <property type="evidence" value="ECO:0007669"/>
    <property type="project" value="UniProtKB-UniRule"/>
</dbReference>
<dbReference type="GO" id="GO:0002099">
    <property type="term" value="P:tRNA wobble guanine modification"/>
    <property type="evidence" value="ECO:0007669"/>
    <property type="project" value="TreeGrafter"/>
</dbReference>
<dbReference type="FunFam" id="2.40.10.240:FF:000001">
    <property type="entry name" value="S-adenosylmethionine:tRNA ribosyltransferase-isomerase"/>
    <property type="match status" value="1"/>
</dbReference>
<dbReference type="FunFam" id="3.40.1780.10:FF:000001">
    <property type="entry name" value="S-adenosylmethionine:tRNA ribosyltransferase-isomerase"/>
    <property type="match status" value="1"/>
</dbReference>
<dbReference type="Gene3D" id="2.40.10.240">
    <property type="entry name" value="QueA-like"/>
    <property type="match status" value="1"/>
</dbReference>
<dbReference type="Gene3D" id="3.40.1780.10">
    <property type="entry name" value="QueA-like"/>
    <property type="match status" value="1"/>
</dbReference>
<dbReference type="HAMAP" id="MF_00113">
    <property type="entry name" value="QueA"/>
    <property type="match status" value="1"/>
</dbReference>
<dbReference type="InterPro" id="IPR003699">
    <property type="entry name" value="QueA"/>
</dbReference>
<dbReference type="InterPro" id="IPR042118">
    <property type="entry name" value="QueA_dom1"/>
</dbReference>
<dbReference type="InterPro" id="IPR042119">
    <property type="entry name" value="QueA_dom2"/>
</dbReference>
<dbReference type="InterPro" id="IPR036100">
    <property type="entry name" value="QueA_sf"/>
</dbReference>
<dbReference type="NCBIfam" id="NF001140">
    <property type="entry name" value="PRK00147.1"/>
    <property type="match status" value="1"/>
</dbReference>
<dbReference type="NCBIfam" id="TIGR00113">
    <property type="entry name" value="queA"/>
    <property type="match status" value="1"/>
</dbReference>
<dbReference type="PANTHER" id="PTHR30307">
    <property type="entry name" value="S-ADENOSYLMETHIONINE:TRNA RIBOSYLTRANSFERASE-ISOMERASE"/>
    <property type="match status" value="1"/>
</dbReference>
<dbReference type="PANTHER" id="PTHR30307:SF0">
    <property type="entry name" value="S-ADENOSYLMETHIONINE:TRNA RIBOSYLTRANSFERASE-ISOMERASE"/>
    <property type="match status" value="1"/>
</dbReference>
<dbReference type="Pfam" id="PF02547">
    <property type="entry name" value="Queuosine_synth"/>
    <property type="match status" value="1"/>
</dbReference>
<dbReference type="SUPFAM" id="SSF111337">
    <property type="entry name" value="QueA-like"/>
    <property type="match status" value="1"/>
</dbReference>
<reference key="1">
    <citation type="submission" date="2007-06" db="EMBL/GenBank/DDBJ databases">
        <authorList>
            <person name="Dodson R.J."/>
            <person name="Harkins D."/>
            <person name="Paulsen I.T."/>
        </authorList>
    </citation>
    <scope>NUCLEOTIDE SEQUENCE [LARGE SCALE GENOMIC DNA]</scope>
    <source>
        <strain>DSM 24068 / PA7</strain>
    </source>
</reference>
<protein>
    <recommendedName>
        <fullName evidence="1">S-adenosylmethionine:tRNA ribosyltransferase-isomerase</fullName>
        <ecNumber evidence="1">2.4.99.17</ecNumber>
    </recommendedName>
    <alternativeName>
        <fullName evidence="1">Queuosine biosynthesis protein QueA</fullName>
    </alternativeName>
</protein>